<organism>
    <name type="scientific">Bifidobacterium adolescentis (strain ATCC 15703 / DSM 20083 / NCTC 11814 / E194a)</name>
    <dbReference type="NCBI Taxonomy" id="367928"/>
    <lineage>
        <taxon>Bacteria</taxon>
        <taxon>Bacillati</taxon>
        <taxon>Actinomycetota</taxon>
        <taxon>Actinomycetes</taxon>
        <taxon>Bifidobacteriales</taxon>
        <taxon>Bifidobacteriaceae</taxon>
        <taxon>Bifidobacterium</taxon>
    </lineage>
</organism>
<keyword id="KW-0012">Acyltransferase</keyword>
<keyword id="KW-0963">Cytoplasm</keyword>
<keyword id="KW-0408">Iron</keyword>
<keyword id="KW-0479">Metal-binding</keyword>
<keyword id="KW-1185">Reference proteome</keyword>
<keyword id="KW-0808">Transferase</keyword>
<keyword id="KW-0819">tRNA processing</keyword>
<feature type="chain" id="PRO_0000303280" description="tRNA N6-adenosine threonylcarbamoyltransferase">
    <location>
        <begin position="1"/>
        <end position="347"/>
    </location>
</feature>
<feature type="binding site" evidence="1">
    <location>
        <position position="113"/>
    </location>
    <ligand>
        <name>Fe cation</name>
        <dbReference type="ChEBI" id="CHEBI:24875"/>
    </ligand>
</feature>
<feature type="binding site" evidence="1">
    <location>
        <position position="117"/>
    </location>
    <ligand>
        <name>Fe cation</name>
        <dbReference type="ChEBI" id="CHEBI:24875"/>
    </ligand>
</feature>
<feature type="binding site" evidence="1">
    <location>
        <begin position="136"/>
        <end position="140"/>
    </location>
    <ligand>
        <name>substrate</name>
    </ligand>
</feature>
<feature type="binding site" evidence="1">
    <location>
        <position position="170"/>
    </location>
    <ligand>
        <name>substrate</name>
    </ligand>
</feature>
<feature type="binding site" evidence="1">
    <location>
        <position position="183"/>
    </location>
    <ligand>
        <name>substrate</name>
    </ligand>
</feature>
<feature type="binding site" evidence="1">
    <location>
        <position position="187"/>
    </location>
    <ligand>
        <name>substrate</name>
    </ligand>
</feature>
<feature type="binding site" evidence="1">
    <location>
        <position position="282"/>
    </location>
    <ligand>
        <name>substrate</name>
    </ligand>
</feature>
<feature type="binding site" evidence="1">
    <location>
        <position position="310"/>
    </location>
    <ligand>
        <name>Fe cation</name>
        <dbReference type="ChEBI" id="CHEBI:24875"/>
    </ligand>
</feature>
<gene>
    <name evidence="1" type="primary">tsaD</name>
    <name type="synonym">gcp</name>
    <name type="ordered locus">BAD_0857</name>
</gene>
<sequence length="347" mass="36127">MSEPIVLGIESTCDETAAAVVQGRTLISNVVASSMDEHARYGGVIPEIASRAHAEAFVPCVSKALADANMTLSDVDAIAVSAGPGLAGCLAVGVSGAKSLAWAANKPIYGINHVIGHIAVTQLQFGPFPKDTLALIVSGGHTSLLHVEDVARHIDVVGTTLDDAAGECFDKVARLLGFPYPGGPHIDRHAQLGNPHAIKVPQGLTQGKAGQQHPYDFSFSGVKTAVARWIEQQQAEGNEIPIDDVCASLADSVATVLARKAMRGCEQYGSKTLIVGGGFSANSQLRAKLLEVGAKHGVEVRIPQIKLCTDNGAMVAMLGVNLVESGVKPSEPDFAIDSAMPLTKISM</sequence>
<proteinExistence type="inferred from homology"/>
<accession>A1A1Q5</accession>
<evidence type="ECO:0000255" key="1">
    <source>
        <dbReference type="HAMAP-Rule" id="MF_01445"/>
    </source>
</evidence>
<reference key="1">
    <citation type="submission" date="2006-12" db="EMBL/GenBank/DDBJ databases">
        <title>Bifidobacterium adolescentis complete genome sequence.</title>
        <authorList>
            <person name="Suzuki T."/>
            <person name="Tsuda Y."/>
            <person name="Kanou N."/>
            <person name="Inoue T."/>
            <person name="Kumazaki K."/>
            <person name="Nagano S."/>
            <person name="Hirai S."/>
            <person name="Tanaka K."/>
            <person name="Watanabe K."/>
        </authorList>
    </citation>
    <scope>NUCLEOTIDE SEQUENCE [LARGE SCALE GENOMIC DNA]</scope>
    <source>
        <strain>ATCC 15703 / DSM 20083 / NCTC 11814 / E194a</strain>
    </source>
</reference>
<name>TSAD_BIFAA</name>
<comment type="function">
    <text evidence="1">Required for the formation of a threonylcarbamoyl group on adenosine at position 37 (t(6)A37) in tRNAs that read codons beginning with adenine. Is involved in the transfer of the threonylcarbamoyl moiety of threonylcarbamoyl-AMP (TC-AMP) to the N6 group of A37, together with TsaE and TsaB. TsaD likely plays a direct catalytic role in this reaction.</text>
</comment>
<comment type="catalytic activity">
    <reaction evidence="1">
        <text>L-threonylcarbamoyladenylate + adenosine(37) in tRNA = N(6)-L-threonylcarbamoyladenosine(37) in tRNA + AMP + H(+)</text>
        <dbReference type="Rhea" id="RHEA:37059"/>
        <dbReference type="Rhea" id="RHEA-COMP:10162"/>
        <dbReference type="Rhea" id="RHEA-COMP:10163"/>
        <dbReference type="ChEBI" id="CHEBI:15378"/>
        <dbReference type="ChEBI" id="CHEBI:73682"/>
        <dbReference type="ChEBI" id="CHEBI:74411"/>
        <dbReference type="ChEBI" id="CHEBI:74418"/>
        <dbReference type="ChEBI" id="CHEBI:456215"/>
        <dbReference type="EC" id="2.3.1.234"/>
    </reaction>
</comment>
<comment type="cofactor">
    <cofactor evidence="1">
        <name>Fe(2+)</name>
        <dbReference type="ChEBI" id="CHEBI:29033"/>
    </cofactor>
    <text evidence="1">Binds 1 Fe(2+) ion per subunit.</text>
</comment>
<comment type="subcellular location">
    <subcellularLocation>
        <location evidence="1">Cytoplasm</location>
    </subcellularLocation>
</comment>
<comment type="similarity">
    <text evidence="1">Belongs to the KAE1 / TsaD family.</text>
</comment>
<protein>
    <recommendedName>
        <fullName evidence="1">tRNA N6-adenosine threonylcarbamoyltransferase</fullName>
        <ecNumber evidence="1">2.3.1.234</ecNumber>
    </recommendedName>
    <alternativeName>
        <fullName evidence="1">N6-L-threonylcarbamoyladenine synthase</fullName>
        <shortName evidence="1">t(6)A synthase</shortName>
    </alternativeName>
    <alternativeName>
        <fullName evidence="1">t(6)A37 threonylcarbamoyladenosine biosynthesis protein TsaD</fullName>
    </alternativeName>
    <alternativeName>
        <fullName evidence="1">tRNA threonylcarbamoyladenosine biosynthesis protein TsaD</fullName>
    </alternativeName>
</protein>
<dbReference type="EC" id="2.3.1.234" evidence="1"/>
<dbReference type="EMBL" id="AP009256">
    <property type="protein sequence ID" value="BAF39638.1"/>
    <property type="molecule type" value="Genomic_DNA"/>
</dbReference>
<dbReference type="RefSeq" id="WP_011743222.1">
    <property type="nucleotide sequence ID" value="NC_008618.1"/>
</dbReference>
<dbReference type="SMR" id="A1A1Q5"/>
<dbReference type="STRING" id="367928.BAD_0857"/>
<dbReference type="PaxDb" id="1680-BADO_0912"/>
<dbReference type="GeneID" id="4557249"/>
<dbReference type="KEGG" id="bad:BAD_0857"/>
<dbReference type="HOGENOM" id="CLU_023208_0_2_11"/>
<dbReference type="Proteomes" id="UP000008702">
    <property type="component" value="Chromosome"/>
</dbReference>
<dbReference type="GO" id="GO:0005737">
    <property type="term" value="C:cytoplasm"/>
    <property type="evidence" value="ECO:0007669"/>
    <property type="project" value="UniProtKB-SubCell"/>
</dbReference>
<dbReference type="GO" id="GO:0005506">
    <property type="term" value="F:iron ion binding"/>
    <property type="evidence" value="ECO:0007669"/>
    <property type="project" value="UniProtKB-UniRule"/>
</dbReference>
<dbReference type="GO" id="GO:0061711">
    <property type="term" value="F:N(6)-L-threonylcarbamoyladenine synthase activity"/>
    <property type="evidence" value="ECO:0007669"/>
    <property type="project" value="UniProtKB-EC"/>
</dbReference>
<dbReference type="GO" id="GO:0002949">
    <property type="term" value="P:tRNA threonylcarbamoyladenosine modification"/>
    <property type="evidence" value="ECO:0007669"/>
    <property type="project" value="UniProtKB-UniRule"/>
</dbReference>
<dbReference type="CDD" id="cd24133">
    <property type="entry name" value="ASKHA_NBD_TsaD_bac"/>
    <property type="match status" value="1"/>
</dbReference>
<dbReference type="FunFam" id="3.30.420.40:FF:000012">
    <property type="entry name" value="tRNA N6-adenosine threonylcarbamoyltransferase"/>
    <property type="match status" value="1"/>
</dbReference>
<dbReference type="FunFam" id="3.30.420.40:FF:000040">
    <property type="entry name" value="tRNA N6-adenosine threonylcarbamoyltransferase"/>
    <property type="match status" value="1"/>
</dbReference>
<dbReference type="Gene3D" id="3.30.420.40">
    <property type="match status" value="2"/>
</dbReference>
<dbReference type="HAMAP" id="MF_01445">
    <property type="entry name" value="TsaD"/>
    <property type="match status" value="1"/>
</dbReference>
<dbReference type="InterPro" id="IPR043129">
    <property type="entry name" value="ATPase_NBD"/>
</dbReference>
<dbReference type="InterPro" id="IPR000905">
    <property type="entry name" value="Gcp-like_dom"/>
</dbReference>
<dbReference type="InterPro" id="IPR017861">
    <property type="entry name" value="KAE1/TsaD"/>
</dbReference>
<dbReference type="InterPro" id="IPR022450">
    <property type="entry name" value="TsaD"/>
</dbReference>
<dbReference type="NCBIfam" id="TIGR00329">
    <property type="entry name" value="gcp_kae1"/>
    <property type="match status" value="1"/>
</dbReference>
<dbReference type="NCBIfam" id="TIGR03723">
    <property type="entry name" value="T6A_TsaD_YgjD"/>
    <property type="match status" value="1"/>
</dbReference>
<dbReference type="PANTHER" id="PTHR11735">
    <property type="entry name" value="TRNA N6-ADENOSINE THREONYLCARBAMOYLTRANSFERASE"/>
    <property type="match status" value="1"/>
</dbReference>
<dbReference type="PANTHER" id="PTHR11735:SF6">
    <property type="entry name" value="TRNA N6-ADENOSINE THREONYLCARBAMOYLTRANSFERASE, MITOCHONDRIAL"/>
    <property type="match status" value="1"/>
</dbReference>
<dbReference type="Pfam" id="PF00814">
    <property type="entry name" value="TsaD"/>
    <property type="match status" value="1"/>
</dbReference>
<dbReference type="PRINTS" id="PR00789">
    <property type="entry name" value="OSIALOPTASE"/>
</dbReference>
<dbReference type="SUPFAM" id="SSF53067">
    <property type="entry name" value="Actin-like ATPase domain"/>
    <property type="match status" value="1"/>
</dbReference>